<name>PP1G_HUMAN</name>
<evidence type="ECO:0000250" key="1">
    <source>
        <dbReference type="UniProtKB" id="P63087"/>
    </source>
</evidence>
<evidence type="ECO:0000256" key="2">
    <source>
        <dbReference type="SAM" id="MobiDB-lite"/>
    </source>
</evidence>
<evidence type="ECO:0000269" key="3">
    <source>
    </source>
</evidence>
<evidence type="ECO:0000269" key="4">
    <source>
    </source>
</evidence>
<evidence type="ECO:0000269" key="5">
    <source>
    </source>
</evidence>
<evidence type="ECO:0000269" key="6">
    <source>
    </source>
</evidence>
<evidence type="ECO:0000269" key="7">
    <source>
    </source>
</evidence>
<evidence type="ECO:0000269" key="8">
    <source>
    </source>
</evidence>
<evidence type="ECO:0000269" key="9">
    <source>
    </source>
</evidence>
<evidence type="ECO:0000269" key="10">
    <source>
    </source>
</evidence>
<evidence type="ECO:0000269" key="11">
    <source>
    </source>
</evidence>
<evidence type="ECO:0000269" key="12">
    <source>
    </source>
</evidence>
<evidence type="ECO:0000269" key="13">
    <source>
    </source>
</evidence>
<evidence type="ECO:0000269" key="14">
    <source>
    </source>
</evidence>
<evidence type="ECO:0000269" key="15">
    <source>
    </source>
</evidence>
<evidence type="ECO:0000269" key="16">
    <source>
    </source>
</evidence>
<evidence type="ECO:0000269" key="17">
    <source>
    </source>
</evidence>
<evidence type="ECO:0000269" key="18">
    <source>
    </source>
</evidence>
<evidence type="ECO:0000269" key="19">
    <source>
    </source>
</evidence>
<evidence type="ECO:0000269" key="20">
    <source>
    </source>
</evidence>
<evidence type="ECO:0000269" key="21">
    <source>
    </source>
</evidence>
<evidence type="ECO:0000269" key="22">
    <source>
    </source>
</evidence>
<evidence type="ECO:0000269" key="23">
    <source>
    </source>
</evidence>
<evidence type="ECO:0000269" key="24">
    <source>
    </source>
</evidence>
<evidence type="ECO:0000269" key="25">
    <source>
    </source>
</evidence>
<evidence type="ECO:0000269" key="26">
    <source>
    </source>
</evidence>
<evidence type="ECO:0000269" key="27">
    <source>
    </source>
</evidence>
<evidence type="ECO:0000269" key="28">
    <source>
    </source>
</evidence>
<evidence type="ECO:0000269" key="29">
    <source>
    </source>
</evidence>
<evidence type="ECO:0000269" key="30">
    <source>
    </source>
</evidence>
<evidence type="ECO:0000269" key="31">
    <source>
    </source>
</evidence>
<evidence type="ECO:0000269" key="32">
    <source>
    </source>
</evidence>
<evidence type="ECO:0000269" key="33">
    <source>
    </source>
</evidence>
<evidence type="ECO:0000269" key="34">
    <source>
    </source>
</evidence>
<evidence type="ECO:0000269" key="35">
    <source ref="3"/>
</evidence>
<evidence type="ECO:0000269" key="36">
    <source ref="4"/>
</evidence>
<evidence type="ECO:0000303" key="37">
    <source>
    </source>
</evidence>
<evidence type="ECO:0000305" key="38"/>
<evidence type="ECO:0007744" key="39">
    <source>
        <dbReference type="PDB" id="1JK7"/>
    </source>
</evidence>
<evidence type="ECO:0007744" key="40">
    <source>
        <dbReference type="PDB" id="1U32"/>
    </source>
</evidence>
<evidence type="ECO:0007744" key="41">
    <source>
        <dbReference type="PDB" id="7SD0"/>
    </source>
</evidence>
<evidence type="ECO:0007744" key="42">
    <source>
    </source>
</evidence>
<evidence type="ECO:0007744" key="43">
    <source>
    </source>
</evidence>
<evidence type="ECO:0007744" key="44">
    <source>
    </source>
</evidence>
<evidence type="ECO:0007744" key="45">
    <source>
    </source>
</evidence>
<evidence type="ECO:0007744" key="46">
    <source>
    </source>
</evidence>
<evidence type="ECO:0007829" key="47">
    <source>
        <dbReference type="PDB" id="4UT3"/>
    </source>
</evidence>
<evidence type="ECO:0007829" key="48">
    <source>
        <dbReference type="PDB" id="5INB"/>
    </source>
</evidence>
<evidence type="ECO:0007829" key="49">
    <source>
        <dbReference type="PDB" id="7SD0"/>
    </source>
</evidence>
<organism>
    <name type="scientific">Homo sapiens</name>
    <name type="common">Human</name>
    <dbReference type="NCBI Taxonomy" id="9606"/>
    <lineage>
        <taxon>Eukaryota</taxon>
        <taxon>Metazoa</taxon>
        <taxon>Chordata</taxon>
        <taxon>Craniata</taxon>
        <taxon>Vertebrata</taxon>
        <taxon>Euteleostomi</taxon>
        <taxon>Mammalia</taxon>
        <taxon>Eutheria</taxon>
        <taxon>Euarchontoglires</taxon>
        <taxon>Primates</taxon>
        <taxon>Haplorrhini</taxon>
        <taxon>Catarrhini</taxon>
        <taxon>Hominidae</taxon>
        <taxon>Homo</taxon>
    </lineage>
</organism>
<sequence>MADLDKLNIDSIIQRLLEVRGSKPGKNVQLQENEIRGLCLKSREIFLSQPILLELEAPLKICGDIHGQYYDLLRLFEYGGFPPESNYLFLGDYVDRGKQSLETICLLLAYKIKYPENFFLLRGNHECASINRIYGFYDECKRRYNIKLWKTFTDCFNCLPIAAIVDEKIFCCHGGLSPDLQSMEQIRRIMRPTDVPDQGLLCDLLWSDPDKDVLGWGENDRGVSFTFGAEVVAKFLHKHDLDLICRAHQVVEDGYEFFAKRQLVTLFSAPNYCGEFDNAGAMMSVDETLMCSFQILKPAEKKKPNATRPVTPPRGMITKQAKK</sequence>
<feature type="initiator methionine" description="Removed" evidence="35 36 43 46">
    <location>
        <position position="1"/>
    </location>
</feature>
<feature type="chain" id="PRO_0000058787" description="Serine/threonine-protein phosphatase PP1-gamma catalytic subunit">
    <location>
        <begin position="2"/>
        <end position="323"/>
    </location>
</feature>
<feature type="region of interest" description="Disordered" evidence="2">
    <location>
        <begin position="302"/>
        <end position="323"/>
    </location>
</feature>
<feature type="active site" description="Proton donor" evidence="32">
    <location>
        <position position="125"/>
    </location>
</feature>
<feature type="binding site" evidence="3 8 30 39 40 41">
    <location>
        <position position="64"/>
    </location>
    <ligand>
        <name>Mn(2+)</name>
        <dbReference type="ChEBI" id="CHEBI:29035"/>
        <label>1</label>
    </ligand>
</feature>
<feature type="binding site" evidence="3 8 30 39 40 41">
    <location>
        <position position="64"/>
    </location>
    <ligand>
        <name>Mn(2+)</name>
        <dbReference type="ChEBI" id="CHEBI:29035"/>
        <label>2</label>
    </ligand>
</feature>
<feature type="binding site" evidence="3 8 30 39 40 41">
    <location>
        <position position="66"/>
    </location>
    <ligand>
        <name>Mn(2+)</name>
        <dbReference type="ChEBI" id="CHEBI:29035"/>
        <label>1</label>
    </ligand>
</feature>
<feature type="binding site" evidence="3 8 30 39 40 41">
    <location>
        <position position="92"/>
    </location>
    <ligand>
        <name>Mn(2+)</name>
        <dbReference type="ChEBI" id="CHEBI:29035"/>
        <label>1</label>
    </ligand>
</feature>
<feature type="binding site" evidence="3 8 30 39 40 41">
    <location>
        <position position="92"/>
    </location>
    <ligand>
        <name>Mn(2+)</name>
        <dbReference type="ChEBI" id="CHEBI:29035"/>
        <label>2</label>
    </ligand>
</feature>
<feature type="binding site" evidence="3 8 30 39 40 41">
    <location>
        <position position="124"/>
    </location>
    <ligand>
        <name>Mn(2+)</name>
        <dbReference type="ChEBI" id="CHEBI:29035"/>
        <label>2</label>
    </ligand>
</feature>
<feature type="binding site" evidence="3 8 30 39 40 41">
    <location>
        <position position="173"/>
    </location>
    <ligand>
        <name>Mn(2+)</name>
        <dbReference type="ChEBI" id="CHEBI:29035"/>
        <label>2</label>
    </ligand>
</feature>
<feature type="binding site" evidence="3 8 30 39 40 41">
    <location>
        <position position="248"/>
    </location>
    <ligand>
        <name>Mn(2+)</name>
        <dbReference type="ChEBI" id="CHEBI:29035"/>
        <label>2</label>
    </ligand>
</feature>
<feature type="site" description="Inhibition by microcystin toxin binding">
    <location>
        <position position="273"/>
    </location>
</feature>
<feature type="modified residue" description="N-acetylalanine" evidence="35 36 43 46">
    <location>
        <position position="2"/>
    </location>
</feature>
<feature type="modified residue" description="Phosphothreonine" evidence="42">
    <location>
        <position position="307"/>
    </location>
</feature>
<feature type="modified residue" description="Phosphothreonine" evidence="44 45">
    <location>
        <position position="311"/>
    </location>
</feature>
<feature type="splice variant" id="VSP_005094" description="In isoform 2." evidence="37">
    <original>GMITKQAKK</original>
    <variation>VASGLNPSIQKASNYRNNTVLYE</variation>
    <location>
        <begin position="315"/>
        <end position="323"/>
    </location>
</feature>
<feature type="sequence variant" id="VAR_051734" description="In dbSNP:rs11558237.">
    <original>F</original>
    <variation>S</variation>
    <location>
        <position position="152"/>
    </location>
</feature>
<feature type="mutagenesis site" description="Promotes SMP complex formation." evidence="30">
    <original>P</original>
    <variation>R</variation>
    <location>
        <position position="50"/>
    </location>
</feature>
<feature type="mutagenesis site" description="Loss of activity." evidence="5">
    <original>H</original>
    <variation>A</variation>
    <location>
        <position position="125"/>
    </location>
</feature>
<feature type="mutagenesis site" description="Abolishes interaction with microcystin toxin." evidence="33">
    <original>C</original>
    <variation>A</variation>
    <variation>S</variation>
    <variation>L</variation>
    <location>
        <position position="273"/>
    </location>
</feature>
<feature type="helix" evidence="48">
    <location>
        <begin position="9"/>
        <end position="17"/>
    </location>
</feature>
<feature type="helix" evidence="48">
    <location>
        <begin position="18"/>
        <end position="21"/>
    </location>
</feature>
<feature type="helix" evidence="48">
    <location>
        <begin position="32"/>
        <end position="48"/>
    </location>
</feature>
<feature type="strand" evidence="48">
    <location>
        <begin position="51"/>
        <end position="55"/>
    </location>
</feature>
<feature type="strand" evidence="48">
    <location>
        <begin position="57"/>
        <end position="62"/>
    </location>
</feature>
<feature type="helix" evidence="48">
    <location>
        <begin position="69"/>
        <end position="79"/>
    </location>
</feature>
<feature type="strand" evidence="48">
    <location>
        <begin position="87"/>
        <end position="89"/>
    </location>
</feature>
<feature type="strand" evidence="48">
    <location>
        <begin position="94"/>
        <end position="98"/>
    </location>
</feature>
<feature type="helix" evidence="48">
    <location>
        <begin position="100"/>
        <end position="113"/>
    </location>
</feature>
<feature type="turn" evidence="48">
    <location>
        <begin position="115"/>
        <end position="117"/>
    </location>
</feature>
<feature type="strand" evidence="48">
    <location>
        <begin position="118"/>
        <end position="120"/>
    </location>
</feature>
<feature type="helix" evidence="49">
    <location>
        <begin position="124"/>
        <end position="126"/>
    </location>
</feature>
<feature type="helix" evidence="48">
    <location>
        <begin position="128"/>
        <end position="131"/>
    </location>
</feature>
<feature type="turn" evidence="47">
    <location>
        <begin position="132"/>
        <end position="135"/>
    </location>
</feature>
<feature type="helix" evidence="48">
    <location>
        <begin position="136"/>
        <end position="143"/>
    </location>
</feature>
<feature type="helix" evidence="48">
    <location>
        <begin position="146"/>
        <end position="156"/>
    </location>
</feature>
<feature type="strand" evidence="48">
    <location>
        <begin position="162"/>
        <end position="165"/>
    </location>
</feature>
<feature type="turn" evidence="48">
    <location>
        <begin position="166"/>
        <end position="168"/>
    </location>
</feature>
<feature type="strand" evidence="48">
    <location>
        <begin position="169"/>
        <end position="174"/>
    </location>
</feature>
<feature type="helix" evidence="48">
    <location>
        <begin position="183"/>
        <end position="187"/>
    </location>
</feature>
<feature type="strand" evidence="48">
    <location>
        <begin position="197"/>
        <end position="199"/>
    </location>
</feature>
<feature type="helix" evidence="48">
    <location>
        <begin position="200"/>
        <end position="206"/>
    </location>
</feature>
<feature type="strand" evidence="48">
    <location>
        <begin position="214"/>
        <end position="218"/>
    </location>
</feature>
<feature type="strand" evidence="48">
    <location>
        <begin position="222"/>
        <end position="227"/>
    </location>
</feature>
<feature type="helix" evidence="48">
    <location>
        <begin position="229"/>
        <end position="239"/>
    </location>
</feature>
<feature type="strand" evidence="48">
    <location>
        <begin position="243"/>
        <end position="246"/>
    </location>
</feature>
<feature type="strand" evidence="48">
    <location>
        <begin position="254"/>
        <end position="258"/>
    </location>
</feature>
<feature type="turn" evidence="48">
    <location>
        <begin position="259"/>
        <end position="262"/>
    </location>
</feature>
<feature type="strand" evidence="48">
    <location>
        <begin position="263"/>
        <end position="267"/>
    </location>
</feature>
<feature type="helix" evidence="48">
    <location>
        <begin position="272"/>
        <end position="274"/>
    </location>
</feature>
<feature type="strand" evidence="48">
    <location>
        <begin position="280"/>
        <end position="285"/>
    </location>
</feature>
<feature type="strand" evidence="48">
    <location>
        <begin position="290"/>
        <end position="298"/>
    </location>
</feature>
<gene>
    <name type="primary">PPP1CC</name>
</gene>
<reference key="1">
    <citation type="journal article" date="1993" name="Biochim. Biophys. Acta">
        <title>Sequence of human protein serine/threonine phosphatase 1 gamma and localization of the gene (PPP1CC) encoding it to chromosome bands 12q24.1-q24.2.</title>
        <authorList>
            <person name="Barker H.M."/>
            <person name="Craig S.P."/>
            <person name="Spurr N.K."/>
            <person name="Cohen P.T.W."/>
        </authorList>
    </citation>
    <scope>NUCLEOTIDE SEQUENCE [MRNA] (ISOFORMS 1 AND 2)</scope>
</reference>
<reference key="2">
    <citation type="journal article" date="2004" name="Genome Res.">
        <title>The status, quality, and expansion of the NIH full-length cDNA project: the Mammalian Gene Collection (MGC).</title>
        <authorList>
            <consortium name="The MGC Project Team"/>
        </authorList>
    </citation>
    <scope>NUCLEOTIDE SEQUENCE [LARGE SCALE MRNA] (ISOFORM 1)</scope>
    <source>
        <tissue>Placenta</tissue>
    </source>
</reference>
<reference key="3">
    <citation type="submission" date="2009-03" db="UniProtKB">
        <authorList>
            <person name="Bienvenut W.V."/>
            <person name="Waridel P."/>
            <person name="Quadroni M."/>
        </authorList>
    </citation>
    <scope>PROTEIN SEQUENCE OF 2-15; 44-60; 99-122; 151-168 AND 247-260</scope>
    <scope>CLEAVAGE OF INITIATOR METHIONINE</scope>
    <scope>ACETYLATION AT ALA-2</scope>
    <scope>IDENTIFICATION BY MASS SPECTROMETRY</scope>
    <source>
        <tissue>Embryonic kidney</tissue>
    </source>
</reference>
<reference key="4">
    <citation type="submission" date="2010-01" db="UniProtKB">
        <authorList>
            <person name="Bienvenut W.V."/>
            <person name="Bilsland A.E."/>
            <person name="Keith W.N."/>
        </authorList>
    </citation>
    <scope>PROTEIN SEQUENCE OF 2-15; 27-36; 44-60; 99-111; 133-141; 151-187 AND 239-260</scope>
    <scope>CLEAVAGE OF INITIATOR METHIONINE</scope>
    <scope>ACETYLATION AT ALA-2</scope>
    <scope>IDENTIFICATION BY MASS SPECTROMETRY</scope>
    <source>
        <tissue>Colon carcinoma</tissue>
    </source>
</reference>
<reference key="5">
    <citation type="journal article" date="1994" name="Mamm. Genome">
        <title>Molecular cloning and chromosomal localization of a human skeletal muscle PP-1 gamma 1 cDNA.</title>
        <authorList>
            <person name="Norman S.A."/>
            <person name="Mott D.M."/>
        </authorList>
    </citation>
    <scope>NUCLEOTIDE SEQUENCE [MRNA] OF 5-323 (ISOFORM 1)</scope>
    <source>
        <tissue>Skeletal muscle</tissue>
    </source>
</reference>
<reference key="6">
    <citation type="journal article" date="1995" name="FEBS Lett.">
        <title>The cyanobacterial toxin microcystin binds covalently to cysteine-273 on protein phosphatase 1.</title>
        <authorList>
            <person name="MacKintosh R.W."/>
            <person name="Dalby K.N."/>
            <person name="Campbell D.G."/>
            <person name="Cohen P.T.W."/>
            <person name="Cohen P."/>
            <person name="MacKintosh C."/>
        </authorList>
    </citation>
    <scope>INTERACTION WITH MICROCYSTIN</scope>
    <scope>MUTAGENESIS OF CYS-273</scope>
</reference>
<reference key="7">
    <citation type="journal article" date="1997" name="FEBS Lett.">
        <title>PPP1R6, a novel member of the family of glycogen-targeting subunits of protein phosphatase 1.</title>
        <authorList>
            <person name="Armstrong C.G."/>
            <person name="Browne G.J."/>
            <person name="Cohen P."/>
            <person name="Cohen P.T.W."/>
        </authorList>
    </citation>
    <scope>INTERACTION WITH PPP1R3D</scope>
</reference>
<reference key="8">
    <citation type="journal article" date="2001" name="J. Cell Sci.">
        <title>Dynamic targeting of protein phosphatase 1 within the nuclei of living mammalian cells.</title>
        <authorList>
            <person name="Trinkle-Mulcahy L."/>
            <person name="Sleeman J.E."/>
            <person name="Lamond A.I."/>
        </authorList>
    </citation>
    <scope>SUBCELLULAR LOCATION</scope>
    <scope>INTERACTION WITH PPP1R8</scope>
    <scope>MUTAGENESIS OF HIS-125</scope>
</reference>
<reference key="9">
    <citation type="journal article" date="2001" name="Mol. Cell. Biol.">
        <title>Growth arrest and DNA damage-inducible protein GADD34 assembles a novel signaling complex containing protein phosphatase 1 and inhibitor 1.</title>
        <authorList>
            <person name="Connor J.H."/>
            <person name="Weiser D.C."/>
            <person name="Li S."/>
            <person name="Hallenbeck J.M."/>
            <person name="Shenolikar S."/>
        </authorList>
    </citation>
    <scope>INTERACTION WITH PPP1R15A</scope>
</reference>
<reference key="10">
    <citation type="journal article" date="2002" name="J. Biol. Chem.">
        <title>Binding of the concave surface of the Sds22 superhelix to the alpha 4/alpha 5/alpha 6-triangle of protein phosphatase-1.</title>
        <authorList>
            <person name="Ceulemans H."/>
            <person name="Vulsteke V."/>
            <person name="De Maeyer M."/>
            <person name="Tatchell K."/>
            <person name="Stalmans W."/>
            <person name="Bollen M."/>
        </authorList>
    </citation>
    <scope>INTERACTION WITH PPP1R7</scope>
</reference>
<reference key="11">
    <citation type="journal article" date="2003" name="Mol. Biol. Cell">
        <title>Time-lapse imaging reveals dynamic relocalization of PP1gamma throughout the mammalian cell cycle.</title>
        <authorList>
            <person name="Trinkle-Mulcahy L."/>
            <person name="Andrews P.D."/>
            <person name="Wickramasinghe S."/>
            <person name="Sleeman J."/>
            <person name="Prescott A."/>
            <person name="Lam Y.W."/>
            <person name="Lyon C."/>
            <person name="Swedlow J.R."/>
            <person name="Lamond A.I."/>
        </authorList>
    </citation>
    <scope>SUBCELLULAR LOCATION</scope>
</reference>
<reference key="12">
    <citation type="journal article" date="2004" name="Ann. N. Y. Acad. Sci.">
        <title>Alternatively spliced protein variants as potential therapeutic targets for male infertility and contraception.</title>
        <authorList>
            <person name="Fardilha M."/>
            <person name="Wu W."/>
            <person name="Sa R."/>
            <person name="Fidalgo S."/>
            <person name="Sousa C."/>
            <person name="Mota C."/>
            <person name="da Cruz e Silva O.A."/>
            <person name="da Cruz e Silva E.F."/>
        </authorList>
    </citation>
    <scope>INTERACTION WITH NEK2</scope>
    <scope>PHOSPHORYLATION</scope>
</reference>
<reference key="13">
    <citation type="journal article" date="2005" name="Science">
        <title>A selective inhibitor of eIF2alpha dephosphorylation protects cells from ER stress.</title>
        <authorList>
            <person name="Boyce M."/>
            <person name="Bryant K.F."/>
            <person name="Jousse C."/>
            <person name="Long K."/>
            <person name="Harding H.P."/>
            <person name="Scheuner D."/>
            <person name="Kaufman R.J."/>
            <person name="Ma D."/>
            <person name="Coen D.M."/>
            <person name="Ron D."/>
            <person name="Yuan J."/>
        </authorList>
    </citation>
    <scope>ACTIVITY REGULATION</scope>
</reference>
<reference key="14">
    <citation type="journal article" date="2006" name="J. Cell Biol.">
        <title>Repo-Man recruits PP1 gamma to chromatin and is essential for cell viability.</title>
        <authorList>
            <person name="Trinkle-Mulcahy L."/>
            <person name="Andersen J."/>
            <person name="Lam Y.W."/>
            <person name="Moorhead G."/>
            <person name="Mann M."/>
            <person name="Lamond A.I."/>
        </authorList>
    </citation>
    <scope>INTERACTION WITH CDCA2</scope>
</reference>
<reference key="15">
    <citation type="journal article" date="2007" name="Cancer Res.">
        <title>Protein phosphatase-1alpha regulates centrosome splitting through Nek2.</title>
        <authorList>
            <person name="Mi J."/>
            <person name="Guo C."/>
            <person name="Brautigan D.L."/>
            <person name="Larner J.M."/>
        </authorList>
    </citation>
    <scope>INTERACTION WITH NEK2</scope>
</reference>
<reference key="16">
    <citation type="journal article" date="2007" name="Mol. Cell">
        <title>S6K1-mediated disassembly of mitochondrial URI/PP1gamma complexes activates a negative feedback program that counters S6K1 survival signaling.</title>
        <authorList>
            <person name="Djouder N."/>
            <person name="Metzler S.C."/>
            <person name="Schmidt A."/>
            <person name="Wirbelauer C."/>
            <person name="Gstaiger M."/>
            <person name="Aebersold R."/>
            <person name="Hess D."/>
            <person name="Krek W."/>
        </authorList>
    </citation>
    <scope>FUNCTION IN DEPHOSPHORYLATION OF RPS6KB1</scope>
    <scope>ACTIVITY REGULATION</scope>
    <scope>INTERACTION WITH URI1</scope>
    <scope>SUBCELLULAR LOCATION</scope>
    <scope>IDENTIFICATION BY MASS SPECTROMETRY</scope>
</reference>
<reference key="17">
    <citation type="journal article" date="2008" name="J. Biol. Chem.">
        <title>NOM1 targets protein phosphatase I to the nucleolus.</title>
        <authorList>
            <person name="Gunawardena S.R."/>
            <person name="Ruis B.L."/>
            <person name="Meyer J.A."/>
            <person name="Kapoor M."/>
            <person name="Conklin K.F."/>
        </authorList>
    </citation>
    <scope>SUBCELLULAR LOCATION</scope>
    <scope>INTERACTION WITH NOM1</scope>
</reference>
<reference key="18">
    <citation type="journal article" date="2008" name="Proc. Natl. Acad. Sci. U.S.A.">
        <title>A quantitative atlas of mitotic phosphorylation.</title>
        <authorList>
            <person name="Dephoure N."/>
            <person name="Zhou C."/>
            <person name="Villen J."/>
            <person name="Beausoleil S.A."/>
            <person name="Bakalarski C.E."/>
            <person name="Elledge S.J."/>
            <person name="Gygi S.P."/>
        </authorList>
    </citation>
    <scope>PHOSPHORYLATION [LARGE SCALE ANALYSIS] AT THR-307</scope>
    <scope>IDENTIFICATION BY MASS SPECTROMETRY [LARGE SCALE ANALYSIS]</scope>
    <source>
        <tissue>Cervix carcinoma</tissue>
    </source>
</reference>
<reference key="19">
    <citation type="journal article" date="2009" name="Nature">
        <title>GlcNAcylation of a histone methyltransferase in retinoic-acid-induced granulopoiesis.</title>
        <authorList>
            <person name="Fujiki R."/>
            <person name="Chikanishi T."/>
            <person name="Hashiba W."/>
            <person name="Ito H."/>
            <person name="Takada I."/>
            <person name="Roeder R.G."/>
            <person name="Kitagawa H."/>
            <person name="Kato S."/>
        </authorList>
    </citation>
    <scope>CAUTION</scope>
    <scope>RETRACTED PAPER</scope>
</reference>
<reference key="20">
    <citation type="journal article" date="2014" name="Nature">
        <title>Retraction: GlcNAcylation of a histone methyltransferase in retinoic-acid-induced granulopoiesis.</title>
        <authorList>
            <person name="Fujiki R."/>
            <person name="Chikanishi T."/>
            <person name="Hashiba W."/>
            <person name="Ito H."/>
            <person name="Takada I."/>
            <person name="Roeder R.G."/>
            <person name="Kitagawa H."/>
            <person name="Kato S."/>
        </authorList>
    </citation>
    <scope>CAUTION</scope>
    <scope>RETRACTION NOTICE OF PUBMED:19377461</scope>
</reference>
<reference key="21">
    <citation type="journal article" date="2011" name="BMC Syst. Biol.">
        <title>Initial characterization of the human central proteome.</title>
        <authorList>
            <person name="Burkard T.R."/>
            <person name="Planyavsky M."/>
            <person name="Kaupe I."/>
            <person name="Breitwieser F.P."/>
            <person name="Buerckstuemmer T."/>
            <person name="Bennett K.L."/>
            <person name="Superti-Furga G."/>
            <person name="Colinge J."/>
        </authorList>
    </citation>
    <scope>IDENTIFICATION BY MASS SPECTROMETRY [LARGE SCALE ANALYSIS]</scope>
</reference>
<reference key="22">
    <citation type="journal article" date="2012" name="Proc. Natl. Acad. Sci. U.S.A.">
        <title>N-terminal acetylome analyses and functional insights of the N-terminal acetyltransferase NatB.</title>
        <authorList>
            <person name="Van Damme P."/>
            <person name="Lasa M."/>
            <person name="Polevoda B."/>
            <person name="Gazquez C."/>
            <person name="Elosegui-Artola A."/>
            <person name="Kim D.S."/>
            <person name="De Juan-Pardo E."/>
            <person name="Demeyer K."/>
            <person name="Hole K."/>
            <person name="Larrea E."/>
            <person name="Timmerman E."/>
            <person name="Prieto J."/>
            <person name="Arnesen T."/>
            <person name="Sherman F."/>
            <person name="Gevaert K."/>
            <person name="Aldabe R."/>
        </authorList>
    </citation>
    <scope>ACETYLATION [LARGE SCALE ANALYSIS] AT ALA-2</scope>
    <scope>CLEAVAGE OF INITIATOR METHIONINE [LARGE SCALE ANALYSIS]</scope>
    <scope>IDENTIFICATION BY MASS SPECTROMETRY [LARGE SCALE ANALYSIS]</scope>
</reference>
<reference key="23">
    <citation type="journal article" date="2013" name="J. Proteome Res.">
        <title>Toward a comprehensive characterization of a human cancer cell phosphoproteome.</title>
        <authorList>
            <person name="Zhou H."/>
            <person name="Di Palma S."/>
            <person name="Preisinger C."/>
            <person name="Peng M."/>
            <person name="Polat A.N."/>
            <person name="Heck A.J."/>
            <person name="Mohammed S."/>
        </authorList>
    </citation>
    <scope>PHOSPHORYLATION [LARGE SCALE ANALYSIS] AT THR-311</scope>
    <scope>IDENTIFICATION BY MASS SPECTROMETRY [LARGE SCALE ANALYSIS]</scope>
    <source>
        <tissue>Cervix carcinoma</tissue>
        <tissue>Erythroleukemia</tissue>
    </source>
</reference>
<reference key="24">
    <citation type="journal article" date="2014" name="J. Proteomics">
        <title>An enzyme assisted RP-RPLC approach for in-depth analysis of human liver phosphoproteome.</title>
        <authorList>
            <person name="Bian Y."/>
            <person name="Song C."/>
            <person name="Cheng K."/>
            <person name="Dong M."/>
            <person name="Wang F."/>
            <person name="Huang J."/>
            <person name="Sun D."/>
            <person name="Wang L."/>
            <person name="Ye M."/>
            <person name="Zou H."/>
        </authorList>
    </citation>
    <scope>PHOSPHORYLATION [LARGE SCALE ANALYSIS] AT THR-311</scope>
    <scope>IDENTIFICATION BY MASS SPECTROMETRY [LARGE SCALE ANALYSIS]</scope>
    <source>
        <tissue>Liver</tissue>
    </source>
</reference>
<reference key="25">
    <citation type="journal article" date="2010" name="J. Biol. Chem.">
        <title>Identification and characterization of a novel human PP1 phosphatase complex.</title>
        <authorList>
            <person name="Lee J.H."/>
            <person name="You J."/>
            <person name="Dobrota E."/>
            <person name="Skalnik D.G."/>
        </authorList>
    </citation>
    <scope>IDENTIFICATION IN THE PTW/PP1 PHOSPHATASE COMPLEX</scope>
    <scope>FUNCTION</scope>
    <scope>INTERACTION WITH PPP1R8</scope>
</reference>
<reference key="26">
    <citation type="journal article" date="2010" name="Mol. Biol. Cell">
        <title>RRP1B targets PP1 to mammalian cell nucleoli and is associated with pre-60S ribosomal subunits.</title>
        <authorList>
            <person name="Chamousset D."/>
            <person name="De Wever V."/>
            <person name="Moorhead G.B."/>
            <person name="Chen Y."/>
            <person name="Boisvert F.M."/>
            <person name="Lamond A.I."/>
            <person name="Trinkle-Mulcahy L."/>
        </authorList>
    </citation>
    <scope>INTERACTION WITH RRP1B</scope>
    <scope>SUBCELLULAR LOCATION</scope>
</reference>
<reference key="27">
    <citation type="journal article" date="2011" name="PLoS ONE">
        <title>Protein phosphatase 1 (PP1) is a post-translational regulator of the mammalian circadian clock.</title>
        <authorList>
            <person name="Schmutz I."/>
            <person name="Wendt S."/>
            <person name="Schnell A."/>
            <person name="Kramer A."/>
            <person name="Mansuy I.M."/>
            <person name="Albrecht U."/>
        </authorList>
    </citation>
    <scope>FUNCTION IN CIRCADIAN CLOCK</scope>
</reference>
<reference key="28">
    <citation type="journal article" date="2013" name="Biol. Open">
        <title>TCTEX1D4, a novel protein phosphatase 1 interactor: connecting the phosphatase to the microtubule network.</title>
        <authorList>
            <person name="Korrodi-Gregorio L."/>
            <person name="Vieira S.I."/>
            <person name="Esteves S.L."/>
            <person name="Silva J.V."/>
            <person name="Freitas M.J."/>
            <person name="Brauns A.K."/>
            <person name="Luers G."/>
            <person name="Abrantes J."/>
            <person name="Esteves P.J."/>
            <person name="da Cruz e Silva O.A."/>
            <person name="Fardilha M."/>
            <person name="da Cruz e Silva E.F."/>
        </authorList>
    </citation>
    <scope>SUBCELLULAR LOCATION</scope>
    <scope>INTERACTION WITH DYNLT4</scope>
</reference>
<reference key="29">
    <citation type="journal article" date="2013" name="BMC Cell Biol.">
        <title>Identification and characterization of two distinct PPP1R2 isoforms in human spermatozoa.</title>
        <authorList>
            <person name="Korrodi-Gregorio L."/>
            <person name="Ferreira M."/>
            <person name="Vintem A.P."/>
            <person name="Wu W."/>
            <person name="Muller T."/>
            <person name="Marcus K."/>
            <person name="Vijayaraghavan S."/>
            <person name="Brautigan D.L."/>
            <person name="da Cruz E Silva O.A."/>
            <person name="Fardilha M."/>
            <person name="da Cruz E Silva E.F."/>
        </authorList>
    </citation>
    <scope>INTERACTION WITH PPP1R2B</scope>
</reference>
<reference key="30">
    <citation type="journal article" date="2013" name="Nature">
        <title>Temporal regulation of EGF signalling networks by the scaffold protein Shc1.</title>
        <authorList>
            <person name="Zheng Y."/>
            <person name="Zhang C."/>
            <person name="Croucher D.R."/>
            <person name="Soliman M.A."/>
            <person name="St-Denis N."/>
            <person name="Pasculescu A."/>
            <person name="Taylor L."/>
            <person name="Tate S.A."/>
            <person name="Hardy W.R."/>
            <person name="Colwill K."/>
            <person name="Dai A.Y."/>
            <person name="Bagshaw R."/>
            <person name="Dennis J.W."/>
            <person name="Gingras A.C."/>
            <person name="Daly R.J."/>
            <person name="Pawson T."/>
        </authorList>
    </citation>
    <scope>INTERACTION WITH PPP1CA</scope>
    <scope>PEAK1 AND SHC1</scope>
    <scope>IDENTIFICATION BY MASS SPECTROMETRY</scope>
</reference>
<reference key="31">
    <citation type="journal article" date="2013" name="Nat. Med.">
        <title>Phosphorylation of FOXP3 controls regulatory T cell function and is inhibited by TNF-alpha in rheumatoid arthritis.</title>
        <authorList>
            <person name="Nie H."/>
            <person name="Zheng Y."/>
            <person name="Li R."/>
            <person name="Guo T.B."/>
            <person name="He D."/>
            <person name="Fang L."/>
            <person name="Liu X."/>
            <person name="Xiao L."/>
            <person name="Chen X."/>
            <person name="Wan B."/>
            <person name="Chin Y.E."/>
            <person name="Zhang J.Z."/>
        </authorList>
    </citation>
    <scope>FUNCTION</scope>
    <scope>INTERACTION WITH FOXP3</scope>
    <scope>INDUCTION</scope>
</reference>
<reference key="32">
    <citation type="journal article" date="2013" name="Immunity">
        <title>Dephosphorylation of the RNA sensors RIG-I and MDA5 by the phosphatase PP1 is essential for innate immune signaling.</title>
        <authorList>
            <person name="Wies E."/>
            <person name="Wang M.K."/>
            <person name="Maharaj N.P."/>
            <person name="Chen K."/>
            <person name="Zhou S."/>
            <person name="Finberg R.W."/>
            <person name="Gack M.U."/>
        </authorList>
    </citation>
    <scope>FUNCTION</scope>
</reference>
<reference key="33">
    <citation type="journal article" date="2014" name="Elife">
        <title>Ki-67 is a PP1-interacting protein that organises the mitotic chromosome periphery.</title>
        <authorList>
            <person name="Booth D.G."/>
            <person name="Takagi M."/>
            <person name="Sanchez-Pulido L."/>
            <person name="Petfalski E."/>
            <person name="Vargiu G."/>
            <person name="Samejima K."/>
            <person name="Imamoto N."/>
            <person name="Ponting C.P."/>
            <person name="Tollervey D."/>
            <person name="Earnshaw W.C."/>
            <person name="Vagnarelli P."/>
        </authorList>
    </citation>
    <scope>INTERACTION WITH MKI67</scope>
</reference>
<reference key="34">
    <citation type="journal article" date="2014" name="J. Biol. Chem.">
        <title>Ki67 antigen contributes to the timely accumulation of protein phosphatase 1gamma on anaphase chromosomes.</title>
        <authorList>
            <person name="Takagi M."/>
            <person name="Nishiyama Y."/>
            <person name="Taguchi A."/>
            <person name="Imamoto N."/>
        </authorList>
    </citation>
    <scope>FUNCTION</scope>
</reference>
<reference key="35">
    <citation type="journal article" date="2015" name="Proteomics">
        <title>N-terminome analysis of the human mitochondrial proteome.</title>
        <authorList>
            <person name="Vaca Jacome A.S."/>
            <person name="Rabilloud T."/>
            <person name="Schaeffer-Reiss C."/>
            <person name="Rompais M."/>
            <person name="Ayoub D."/>
            <person name="Lane L."/>
            <person name="Bairoch A."/>
            <person name="Van Dorsselaer A."/>
            <person name="Carapito C."/>
        </authorList>
    </citation>
    <scope>ACETYLATION [LARGE SCALE ANALYSIS] AT ALA-2</scope>
    <scope>CLEAVAGE OF INITIATOR METHIONINE [LARGE SCALE ANALYSIS]</scope>
    <scope>IDENTIFICATION BY MASS SPECTROMETRY [LARGE SCALE ANALYSIS]</scope>
</reference>
<reference key="36">
    <citation type="journal article" date="2017" name="Biol. Open">
        <title>Phosphatase-regulated recruitment of the spindle- and kinetochore-associated (Ska) complex to kinetochores.</title>
        <authorList>
            <person name="Sivakumar S."/>
            <person name="Gorbsky G.J."/>
        </authorList>
    </citation>
    <scope>FUNCTION</scope>
</reference>
<reference key="37">
    <citation type="journal article" date="2018" name="Structure">
        <title>KNL1 Binding to PP1 and Microtubules Is Mutually Exclusive.</title>
        <authorList>
            <person name="Bajaj R."/>
            <person name="Bollen M."/>
            <person name="Peti W."/>
            <person name="Page R."/>
        </authorList>
    </citation>
    <scope>INTERACTION WITH KNL1</scope>
</reference>
<reference key="38">
    <citation type="journal article" date="2021" name="Cell Rep.">
        <title>Feedback control of PLK1 by Apolo1 ensures accurate chromosome segregation.</title>
        <authorList>
            <person name="Xu L."/>
            <person name="Ali M."/>
            <person name="Duan W."/>
            <person name="Yuan X."/>
            <person name="Garba F."/>
            <person name="Mullen M."/>
            <person name="Sun B."/>
            <person name="Poser I."/>
            <person name="Duan H."/>
            <person name="Lu J."/>
            <person name="Tian R."/>
            <person name="Ge Y."/>
            <person name="Chu L."/>
            <person name="Pan W."/>
            <person name="Wang D."/>
            <person name="Hyman A."/>
            <person name="Green H."/>
            <person name="Li L."/>
            <person name="Dou Z."/>
            <person name="Liu D."/>
            <person name="Liu X."/>
            <person name="Yao X."/>
        </authorList>
    </citation>
    <scope>INTERACTION WITH FIRRM</scope>
</reference>
<reference key="39">
    <citation type="journal article" date="2022" name="Nature">
        <title>Structure-function analysis of the SHOC2-MRAS-PP1c holophosphatase complex.</title>
        <authorList>
            <person name="Kwon J.J."/>
            <person name="Hajian B."/>
            <person name="Bian Y."/>
            <person name="Young L.C."/>
            <person name="Amor A.J."/>
            <person name="Fuller J.R."/>
            <person name="Fraley C.V."/>
            <person name="Sykes A.M."/>
            <person name="So J."/>
            <person name="Pan J."/>
            <person name="Baker L."/>
            <person name="Lee S.J."/>
            <person name="Wheeler D.B."/>
            <person name="Mayhew D.L."/>
            <person name="Persky N.S."/>
            <person name="Yang X."/>
            <person name="Root D.E."/>
            <person name="Barsotti A.M."/>
            <person name="Stamford A.W."/>
            <person name="Perry C.K."/>
            <person name="Burgin A."/>
            <person name="McCormick F."/>
            <person name="Lemke C.T."/>
            <person name="Hahn W.C."/>
            <person name="Aguirre A.J."/>
        </authorList>
    </citation>
    <scope>FUNCTION</scope>
    <scope>CATALYTIC ACTIVITY</scope>
    <scope>INTERACTION WITH SHOC2; MRAS; KRAS; NRAS AND HRAS</scope>
</reference>
<reference evidence="39" key="40">
    <citation type="journal article" date="1995" name="J. Mol. Biol.">
        <title>Crystal structure of the catalytic subunit of human protein phosphatase 1 and its complex with tungstate.</title>
        <authorList>
            <person name="Egloff M.-P."/>
            <person name="Cohen P.T.W."/>
            <person name="Reinemer P."/>
            <person name="Barford D."/>
        </authorList>
    </citation>
    <scope>X-RAY CRYSTALLOGRAPHY (2.5 ANGSTROMS)</scope>
    <scope>ACTIVE SITE</scope>
</reference>
<reference evidence="40" key="41">
    <citation type="journal article" date="2001" name="J. Biol. Chem.">
        <title>Crystal structure of the tumor-promoter okadaic acid bound to protein phosphatase-1.</title>
        <authorList>
            <person name="Maynes J.T."/>
            <person name="Bateman K.S."/>
            <person name="Cherney M.M."/>
            <person name="Das A.K."/>
            <person name="Luu H.A."/>
            <person name="Holmes C.F."/>
            <person name="James M.N."/>
        </authorList>
    </citation>
    <scope>X-RAY CRYSTALLOGRAPHY (1.9 ANGSTROMS) IN COMPLEX WITH MANGANESE</scope>
    <scope>COFACTOR</scope>
</reference>
<reference key="42">
    <citation type="journal article" date="2004" name="J. Biol. Chem.">
        <title>Crystal structure and mutagenesis of a protein phosphatase-1:calcineurin hybrid elucidate the role of the beta12-beta13 loop in inhibitor binding.</title>
        <authorList>
            <person name="Maynes J.T."/>
            <person name="Perreault K.R."/>
            <person name="Cherney M.M."/>
            <person name="Luu H.A."/>
            <person name="James M.N."/>
            <person name="Holmes C.F."/>
        </authorList>
    </citation>
    <scope>X-RAY CRYSTALLOGRAPHY (2.0 ANGSTROMS) OF 6-298 IN COMPLEX WITH MANGANESE</scope>
    <scope>CATALYTIC ACTIVITY</scope>
    <scope>COFACTOR</scope>
</reference>
<reference evidence="41" key="43">
    <citation type="journal article" date="2022" name="Nature">
        <title>Structural basis for SHOC2 modulation of RAS signalling.</title>
        <authorList>
            <person name="Liau N.P.D."/>
            <person name="Johnson M.C."/>
            <person name="Izadi S."/>
            <person name="Gerosa L."/>
            <person name="Hammel M."/>
            <person name="Bruning J.M."/>
            <person name="Wendorff T.J."/>
            <person name="Phung W."/>
            <person name="Hymowitz S.G."/>
            <person name="Sudhamsu J."/>
        </authorList>
    </citation>
    <scope>STRUCTURE BY ELECTRON MICROSCOPY (2.95 ANGSTROMS) IN COMPLEX WITH MN(2+); SHOC2 AND MRAS</scope>
    <scope>FUNCTION</scope>
    <scope>CATALYTIC ACTIVITY</scope>
    <scope>COFACTOR</scope>
    <scope>INTERACTION WITH SHOC2; MRAS; KRAS; NRAS AND HRAS</scope>
    <scope>MUTAGENESIS OF PRO-50</scope>
</reference>
<keyword id="KW-0002">3D-structure</keyword>
<keyword id="KW-0007">Acetylation</keyword>
<keyword id="KW-0025">Alternative splicing</keyword>
<keyword id="KW-0090">Biological rhythms</keyword>
<keyword id="KW-0119">Carbohydrate metabolism</keyword>
<keyword id="KW-0131">Cell cycle</keyword>
<keyword id="KW-0132">Cell division</keyword>
<keyword id="KW-0137">Centromere</keyword>
<keyword id="KW-0158">Chromosome</keyword>
<keyword id="KW-0963">Cytoplasm</keyword>
<keyword id="KW-0206">Cytoskeleton</keyword>
<keyword id="KW-0903">Direct protein sequencing</keyword>
<keyword id="KW-0225">Disease variant</keyword>
<keyword id="KW-1015">Disulfide bond</keyword>
<keyword id="KW-0321">Glycogen metabolism</keyword>
<keyword id="KW-0378">Hydrolase</keyword>
<keyword id="KW-0995">Kinetochore</keyword>
<keyword id="KW-0464">Manganese</keyword>
<keyword id="KW-0479">Metal-binding</keyword>
<keyword id="KW-0496">Mitochondrion</keyword>
<keyword id="KW-0539">Nucleus</keyword>
<keyword id="KW-0597">Phosphoprotein</keyword>
<keyword id="KW-0904">Protein phosphatase</keyword>
<keyword id="KW-1267">Proteomics identification</keyword>
<keyword id="KW-1185">Reference proteome</keyword>
<accession>P36873</accession>
<proteinExistence type="evidence at protein level"/>
<protein>
    <recommendedName>
        <fullName>Serine/threonine-protein phosphatase PP1-gamma catalytic subunit</fullName>
        <shortName>PP-1G</shortName>
        <ecNumber evidence="30 31">3.1.3.16</ecNumber>
    </recommendedName>
    <alternativeName>
        <fullName>Protein phosphatase 1C catalytic subunit</fullName>
    </alternativeName>
</protein>
<comment type="function">
    <text evidence="1 13 16 18 19 20 26 27 30 31">Protein phosphatase that associates with over 200 regulatory proteins to form highly specific holoenzymes which dephosphorylate hundreds of biological targets (PubMed:17936702, PubMed:25012651). Protein phosphatase 1 (PP1) is essential for cell division, and participates in the regulation of glycogen metabolism, muscle contractility and protein synthesis. Dephosphorylates RPS6KB1 (PubMed:17936702). Involved in regulation of ionic conductances and long-term synaptic plasticity. May play an important role in dephosphorylating substrates such as the postsynaptic density-associated Ca(2+)/calmodulin dependent protein kinase II. Component of the PTW/PP1 phosphatase complex, which plays a role in the control of chromatin structure and cell cycle progression during the transition from mitosis into interphase (PubMed:20516061). In balance with CSNK1D and CSNK1E, determines the circadian period length, through the regulation of the speed and rhythmicity of PER1 and PER2 phosphorylation (PubMed:21712997). May dephosphorylate CSNK1D and CSNK1E (By similarity). Regulates the recruitment of the SKA complex to kinetochores (PubMed:28982702). Dephosphorylates the 'Ser-418' residue of FOXP3 in regulatory T-cells (Treg) from patients with rheumatoid arthritis, thereby inactivating FOXP3 and rendering Treg cells functionally defective (PubMed:23396208). Together with PPP1CA (PP1-alpha subunit), dephosphorylates IFIH1/MDA5 and RIG-I leading to their activation and a functional innate immune response (PubMed:23499489). Core component of the SHOC2-MRAS-PP1c (SMP) holophosphatase complex that regulates the MAPK pathway activation (PubMed:35768504, PubMed:35831509). The SMP complex specifically dephosphorylates the inhibitory phosphorylation at 'Ser-259' of RAF1 kinase, 'Ser-365' of BRAF kinase and 'Ser-214' of ARAF kinase, stimulating their kinase activities (PubMed:35768504, PubMed:35831509). Dephosphorylates MKI67 at the onset of anaphase (PubMed:25012651). The SMP complex enhances the dephosphorylation activity and substrate specificity of PP1c (PubMed:35768504, PubMed:35831509).</text>
</comment>
<comment type="catalytic activity">
    <reaction evidence="8 30 31">
        <text>O-phospho-L-seryl-[protein] + H2O = L-seryl-[protein] + phosphate</text>
        <dbReference type="Rhea" id="RHEA:20629"/>
        <dbReference type="Rhea" id="RHEA-COMP:9863"/>
        <dbReference type="Rhea" id="RHEA-COMP:11604"/>
        <dbReference type="ChEBI" id="CHEBI:15377"/>
        <dbReference type="ChEBI" id="CHEBI:29999"/>
        <dbReference type="ChEBI" id="CHEBI:43474"/>
        <dbReference type="ChEBI" id="CHEBI:83421"/>
        <dbReference type="EC" id="3.1.3.16"/>
    </reaction>
</comment>
<comment type="catalytic activity">
    <reaction evidence="8">
        <text>O-phospho-L-threonyl-[protein] + H2O = L-threonyl-[protein] + phosphate</text>
        <dbReference type="Rhea" id="RHEA:47004"/>
        <dbReference type="Rhea" id="RHEA-COMP:11060"/>
        <dbReference type="Rhea" id="RHEA-COMP:11605"/>
        <dbReference type="ChEBI" id="CHEBI:15377"/>
        <dbReference type="ChEBI" id="CHEBI:30013"/>
        <dbReference type="ChEBI" id="CHEBI:43474"/>
        <dbReference type="ChEBI" id="CHEBI:61977"/>
        <dbReference type="EC" id="3.1.3.16"/>
    </reaction>
</comment>
<comment type="cofactor">
    <cofactor evidence="3 8 30">
        <name>Mn(2+)</name>
        <dbReference type="ChEBI" id="CHEBI:29035"/>
    </cofactor>
    <text evidence="3 8 30">Binds 2 manganese ions per subunit.</text>
</comment>
<comment type="activity regulation">
    <text evidence="10 13">Inactivated by binding to URI1. The phosphatase activity of the PPP1R15A-PP1 complex toward EIF2S1 is specifically inhibited by Salubrinal, a drug that protects cells from endoplasmic reticulum stress.</text>
</comment>
<comment type="subunit">
    <text evidence="1 3 4 5 6 8 9 11 12 13 14 16 17 19 21 22 23 25 28 29 30 31 33 34">PP1 comprises a catalytic subunit, PPP1CA, PPP1CB or PPP1CC, which is folded into its native form by inhibitor 2 and glycogen synthetase kinase 3, and then complexed to one or several targeting or regulatory subunits. PPP1R12A, PPP1R12B and PPP1R12C mediate binding to myosin. PPP1R3A (in skeletal muscle), PPP1R3B (in liver), PPP1R3C, PPP1R3D and PPP1R3F (in brain) mediate binding to glycogen. Interacts with cyanobacterial toxin microcystin; disulfide-linked. Interacts with PPP1R3B and PPP1R7. Isoform 2 interacts with SPZ1 (By similarity). Interacts with CDCA2. PPP1R15A and PPP1R15B mediate binding to EIF2S1. Part of a complex containing PPP1R15B, PP1 and NCK1/2. Interacts with IKFZ1; the interaction targets PPP1CC to pericentromeric heterochromatin, dephosphorylates IKAROS, stabilizes it and prevents it from degradation. Interacts with PPP1R42; the interaction is direct (By similarity). Interacts with NOM1 and PPP1R8. Component of the PTW/PP1 phosphatase complex, composed of PPP1R10/PNUTS, TOX4, WDR82, and PPP1CA or PPP1CB or PPP1CC. Interacts with PPP1R8. Interacts with isoform 1 and isoform 4 NEK2. Interacts with URI1; the interaction is phosphorylation-dependent and occurs in a growth factor-dependent manner. Interacts with FOXP3. Interacts with TMEM225 (via RVxF motif) (By similarity). Interacts with MKI67 (PubMed:24867636). Interacts with RRP1B; this targets PPP1CC to the nucleolus (PubMed:20926688). Interacts with PPP1R2B (PubMed:23506001). Found in a complex with PPP1CA, PPP1CC, SHC1 and PEAK1 (PubMed:23846654). Interacts with DYNLT4 (PubMed:23789093). Interacts (via RVxF motif) with FIRRM; regulates PLK1 kinase activity (PubMed:34260926). Interacts with the KNL1 complex subunit KNL1; the interaction is direct and mutually exclusive with KNL1 binding to microtubules (PubMed:30100357). Component of the SHOC2-MRAS-PP1c (SMP) complex consisting of SHOC2, GTP-bound M-Ras/MRAS and the catalytic subunit of protein phosphatase 1 (either PPP1CA, PPP1CB or PPP1CC) (PubMed:35768504, PubMed:35831509). SHOC2 and PP1c preferably bind M-Ras/MRAS, but they also bind K-Ras/KRAS, N-Ras/NRAS and H-Ras/HRAS; these interactions are GTP-dependent and both SHOC2 and PP1c are required to form a stable complex (PubMed:35768504, PubMed:35831509). Interacts with SHOC2 in the absence of Ras GTPases (PubMed:35768504).</text>
</comment>
<comment type="interaction">
    <interactant intactId="EBI-356283">
        <id>P36873</id>
    </interactant>
    <interactant intactId="EBI-2008380">
        <id>Q6ZMQ8</id>
        <label>AATK</label>
    </interactant>
    <organismsDiffer>false</organismsDiffer>
    <experiments>3</experiments>
</comment>
<comment type="interaction">
    <interactant intactId="EBI-356283">
        <id>P36873</id>
    </interactant>
    <interactant intactId="EBI-349905">
        <id>P38398</id>
        <label>BRCA1</label>
    </interactant>
    <organismsDiffer>false</organismsDiffer>
    <experiments>2</experiments>
</comment>
<comment type="interaction">
    <interactant intactId="EBI-356283">
        <id>P36873</id>
    </interactant>
    <interactant intactId="EBI-768015">
        <id>O95400</id>
        <label>CD2BP2</label>
    </interactant>
    <organismsDiffer>false</organismsDiffer>
    <experiments>3</experiments>
</comment>
<comment type="interaction">
    <interactant intactId="EBI-356283">
        <id>P36873</id>
    </interactant>
    <interactant intactId="EBI-4311573">
        <id>Q96S65</id>
        <label>CSRNP1</label>
    </interactant>
    <organismsDiffer>false</organismsDiffer>
    <experiments>4</experiments>
</comment>
<comment type="interaction">
    <interactant intactId="EBI-356283">
        <id>P36873</id>
    </interactant>
    <interactant intactId="EBI-5235958">
        <id>Q9H175</id>
        <label>CSRNP2</label>
    </interactant>
    <organismsDiffer>false</organismsDiffer>
    <experiments>9</experiments>
</comment>
<comment type="interaction">
    <interactant intactId="EBI-356283">
        <id>P36873</id>
    </interactant>
    <interactant intactId="EBI-78473">
        <id>P03372</id>
        <label>ESR1</label>
    </interactant>
    <organismsDiffer>false</organismsDiffer>
    <experiments>3</experiments>
</comment>
<comment type="interaction">
    <interactant intactId="EBI-356283">
        <id>P36873</id>
    </interactant>
    <interactant intactId="EBI-1001161">
        <id>Q8NG31</id>
        <label>KNL1</label>
    </interactant>
    <organismsDiffer>false</organismsDiffer>
    <experiments>4</experiments>
</comment>
<comment type="interaction">
    <interactant intactId="EBI-356283">
        <id>P36873</id>
    </interactant>
    <interactant intactId="EBI-2008933">
        <id>Q8IWU2</id>
        <label>LMTK2</label>
    </interactant>
    <organismsDiffer>false</organismsDiffer>
    <experiments>8</experiments>
</comment>
<comment type="interaction">
    <interactant intactId="EBI-356283">
        <id>P36873</id>
    </interactant>
    <interactant intactId="EBI-12051377">
        <id>Q8N912</id>
        <label>NRAC</label>
    </interactant>
    <organismsDiffer>false</organismsDiffer>
    <experiments>3</experiments>
</comment>
<comment type="interaction">
    <interactant intactId="EBI-356283">
        <id>P36873</id>
    </interactant>
    <interactant intactId="EBI-539828">
        <id>O15294</id>
        <label>OGT</label>
    </interactant>
    <organismsDiffer>false</organismsDiffer>
    <experiments>11</experiments>
</comment>
<comment type="interaction">
    <interactant intactId="EBI-356283">
        <id>P36873</id>
    </interactant>
    <interactant intactId="EBI-1048104">
        <id>O60927</id>
        <label>PPP1R11</label>
    </interactant>
    <organismsDiffer>false</organismsDiffer>
    <experiments>9</experiments>
</comment>
<comment type="interaction">
    <interactant intactId="EBI-356283">
        <id>P36873</id>
    </interactant>
    <interactant intactId="EBI-2815482">
        <id>Q5SWA1</id>
        <label>PPP1R15B</label>
    </interactant>
    <organismsDiffer>false</organismsDiffer>
    <experiments>5</experiments>
</comment>
<comment type="interaction">
    <interactant intactId="EBI-356283">
        <id>P36873</id>
    </interactant>
    <interactant intactId="EBI-710402">
        <id>Q96I34</id>
        <label>PPP1R16A</label>
    </interactant>
    <organismsDiffer>false</organismsDiffer>
    <experiments>3</experiments>
</comment>
<comment type="interaction">
    <interactant intactId="EBI-356283">
        <id>P36873</id>
    </interactant>
    <interactant intactId="EBI-1056517">
        <id>P41236</id>
        <label>PPP1R2</label>
    </interactant>
    <organismsDiffer>false</organismsDiffer>
    <experiments>10</experiments>
</comment>
<comment type="interaction">
    <interactant intactId="EBI-356283">
        <id>P36873</id>
    </interactant>
    <interactant intactId="EBI-10251630">
        <id>Q6NXS1</id>
        <label>PPP1R2B</label>
    </interactant>
    <organismsDiffer>false</organismsDiffer>
    <experiments>5</experiments>
</comment>
<comment type="interaction">
    <interactant intactId="EBI-356283">
        <id>P36873</id>
    </interactant>
    <interactant intactId="EBI-12404293">
        <id>O14990</id>
        <label>PPP1R2C</label>
    </interactant>
    <organismsDiffer>false</organismsDiffer>
    <experiments>3</experiments>
</comment>
<comment type="interaction">
    <interactant intactId="EBI-356283">
        <id>P36873</id>
    </interactant>
    <interactant intactId="EBI-3918864">
        <id>Q86XI6</id>
        <label>PPP1R3B</label>
    </interactant>
    <organismsDiffer>false</organismsDiffer>
    <experiments>5</experiments>
</comment>
<comment type="interaction">
    <interactant intactId="EBI-356283">
        <id>P36873</id>
    </interactant>
    <interactant intactId="EBI-2506727">
        <id>Q9UQK1</id>
        <label>PPP1R3C</label>
    </interactant>
    <organismsDiffer>false</organismsDiffer>
    <experiments>4</experiments>
</comment>
<comment type="interaction">
    <interactant intactId="EBI-356283">
        <id>P36873</id>
    </interactant>
    <interactant intactId="EBI-1024281">
        <id>Q15435</id>
        <label>PPP1R7</label>
    </interactant>
    <organismsDiffer>false</organismsDiffer>
    <experiments>8</experiments>
</comment>
<comment type="interaction">
    <interactant intactId="EBI-356283">
        <id>P36873</id>
    </interactant>
    <interactant intactId="EBI-12252736">
        <id>Q12972-2</id>
        <label>PPP1R8</label>
    </interactant>
    <organismsDiffer>false</organismsDiffer>
    <experiments>3</experiments>
</comment>
<comment type="interaction">
    <interactant intactId="EBI-356283">
        <id>P36873</id>
    </interactant>
    <interactant intactId="EBI-351275">
        <id>Q96SB3</id>
        <label>PPP1R9B</label>
    </interactant>
    <organismsDiffer>false</organismsDiffer>
    <experiments>8</experiments>
</comment>
<comment type="interaction">
    <interactant intactId="EBI-356283">
        <id>P36873</id>
    </interactant>
    <interactant intactId="EBI-372051">
        <id>Q14684</id>
        <label>RRP1B</label>
    </interactant>
    <organismsDiffer>false</organismsDiffer>
    <experiments>12</experiments>
</comment>
<comment type="interaction">
    <interactant intactId="EBI-356283">
        <id>P36873</id>
    </interactant>
    <interactant intactId="EBI-12000762">
        <id>Q7Z5V6-2</id>
        <label>SAXO4</label>
    </interactant>
    <organismsDiffer>false</organismsDiffer>
    <experiments>3</experiments>
</comment>
<comment type="interaction">
    <interactant intactId="EBI-356283">
        <id>P36873</id>
    </interactant>
    <interactant intactId="EBI-11952721">
        <id>Q05BL1</id>
        <label>TP53BP2</label>
    </interactant>
    <organismsDiffer>false</organismsDiffer>
    <experiments>3</experiments>
</comment>
<comment type="interaction">
    <interactant intactId="EBI-356283">
        <id>P36873</id>
    </interactant>
    <interactant intactId="EBI-77642">
        <id>Q13625</id>
        <label>TP53BP2</label>
    </interactant>
    <organismsDiffer>false</organismsDiffer>
    <experiments>11</experiments>
</comment>
<comment type="interaction">
    <interactant intactId="EBI-356283">
        <id>P36873</id>
    </interactant>
    <interactant intactId="EBI-10175039">
        <id>Q13625-3</id>
        <label>TP53BP2</label>
    </interactant>
    <organismsDiffer>false</organismsDiffer>
    <experiments>3</experiments>
</comment>
<comment type="interaction">
    <interactant intactId="EBI-356283">
        <id>P36873</id>
    </interactant>
    <interactant intactId="EBI-11978969">
        <id>Q4KMQ1-2</id>
        <label>TPRN</label>
    </interactant>
    <organismsDiffer>false</organismsDiffer>
    <experiments>3</experiments>
</comment>
<comment type="interaction">
    <interactant intactId="EBI-356283">
        <id>P36873</id>
    </interactant>
    <interactant intactId="EBI-357067">
        <id>O94763</id>
        <label>URI1</label>
    </interactant>
    <organismsDiffer>false</organismsDiffer>
    <experiments>20</experiments>
</comment>
<comment type="interaction">
    <interactant intactId="EBI-356283">
        <id>P36873</id>
    </interactant>
    <interactant intactId="EBI-12590720">
        <id>O94763-1</id>
        <label>URI1</label>
    </interactant>
    <organismsDiffer>false</organismsDiffer>
    <experiments>8</experiments>
</comment>
<comment type="interaction">
    <interactant intactId="EBI-356283">
        <id>P36873</id>
    </interactant>
    <interactant intactId="EBI-296817">
        <id>O95405</id>
        <label>ZFYVE9</label>
    </interactant>
    <organismsDiffer>false</organismsDiffer>
    <experiments>8</experiments>
</comment>
<comment type="interaction">
    <interactant intactId="EBI-356283">
        <id>P36873</id>
    </interactant>
    <interactant intactId="EBI-9977294">
        <id>Q9UEG4</id>
        <label>ZNF629</label>
    </interactant>
    <organismsDiffer>false</organismsDiffer>
    <experiments>3</experiments>
</comment>
<comment type="interaction">
    <interactant intactId="EBI-356283">
        <id>P36873</id>
    </interactant>
    <interactant intactId="EBI-79859">
        <id>O08785</id>
        <label>Clock</label>
    </interactant>
    <organismsDiffer>true</organismsDiffer>
    <experiments>2</experiments>
</comment>
<comment type="interaction">
    <interactant intactId="EBI-356289">
        <id>P36873-1</id>
    </interactant>
    <interactant intactId="EBI-4311709">
        <id>Q5JR98</id>
        <label>DYNLT4</label>
    </interactant>
    <organismsDiffer>false</organismsDiffer>
    <experiments>2</experiments>
</comment>
<comment type="interaction">
    <interactant intactId="EBI-356289">
        <id>P36873-1</id>
    </interactant>
    <interactant intactId="EBI-633182">
        <id>P51955</id>
        <label>NEK2</label>
    </interactant>
    <organismsDiffer>false</organismsDiffer>
    <experiments>2</experiments>
</comment>
<comment type="interaction">
    <interactant intactId="EBI-356289">
        <id>P36873-1</id>
    </interactant>
    <interactant intactId="EBI-21448143">
        <id>Q5JTV8-3</id>
        <label>TOR1AIP1</label>
    </interactant>
    <organismsDiffer>false</organismsDiffer>
    <experiments>4</experiments>
</comment>
<comment type="interaction">
    <interactant intactId="EBI-356289">
        <id>P36873-1</id>
    </interactant>
    <interactant intactId="EBI-366083">
        <id>P04637</id>
        <label>TP53</label>
    </interactant>
    <organismsDiffer>false</organismsDiffer>
    <experiments>2</experiments>
</comment>
<comment type="interaction">
    <interactant intactId="EBI-3964623">
        <id>P36873-2</id>
    </interactant>
    <interactant intactId="EBI-16628643">
        <id>Q5JQC9</id>
        <label>AKAP4</label>
    </interactant>
    <organismsDiffer>false</organismsDiffer>
    <experiments>4</experiments>
</comment>
<comment type="interaction">
    <interactant intactId="EBI-3964623">
        <id>P36873-2</id>
    </interactant>
    <interactant intactId="EBI-4311709">
        <id>Q5JR98</id>
        <label>DYNLT4</label>
    </interactant>
    <organismsDiffer>false</organismsDiffer>
    <experiments>3</experiments>
</comment>
<comment type="interaction">
    <interactant intactId="EBI-3964623">
        <id>P36873-2</id>
    </interactant>
    <interactant intactId="EBI-636085">
        <id>Q96S59</id>
        <label>RANBP9</label>
    </interactant>
    <organismsDiffer>false</organismsDiffer>
    <experiments>3</experiments>
</comment>
<comment type="interaction">
    <interactant intactId="EBI-3964623">
        <id>P36873-2</id>
    </interactant>
    <interactant intactId="EBI-4311771">
        <id>Q7Z5V6</id>
        <label>SAXO4</label>
    </interactant>
    <organismsDiffer>false</organismsDiffer>
    <experiments>4</experiments>
</comment>
<comment type="interaction">
    <interactant intactId="EBI-3964623">
        <id>P36873-2</id>
    </interactant>
    <interactant intactId="EBI-4311408">
        <id>A1DRY3</id>
    </interactant>
    <organismsDiffer>false</organismsDiffer>
    <experiments>2</experiments>
</comment>
<comment type="subcellular location">
    <subcellularLocation>
        <location evidence="5">Cytoplasm</location>
    </subcellularLocation>
    <subcellularLocation>
        <location>Nucleus</location>
    </subcellularLocation>
    <subcellularLocation>
        <location evidence="5 17 22">Nucleus</location>
        <location evidence="5 17 22">Nucleolus</location>
    </subcellularLocation>
    <subcellularLocation>
        <location evidence="5">Nucleus</location>
        <location evidence="5">Nucleoplasm</location>
    </subcellularLocation>
    <subcellularLocation>
        <location evidence="5">Nucleus speckle</location>
    </subcellularLocation>
    <subcellularLocation>
        <location evidence="7">Chromosome</location>
        <location evidence="7">Centromere</location>
        <location evidence="7">Kinetochore</location>
    </subcellularLocation>
    <subcellularLocation>
        <location evidence="7">Cleavage furrow</location>
    </subcellularLocation>
    <subcellularLocation>
        <location evidence="7">Midbody</location>
    </subcellularLocation>
    <subcellularLocation>
        <location evidence="13">Mitochondrion</location>
    </subcellularLocation>
    <subcellularLocation>
        <location evidence="22">Cytoplasm</location>
        <location evidence="22">Cytoskeleton</location>
        <location evidence="22">Microtubule organizing center</location>
    </subcellularLocation>
    <text evidence="1 5 7 13 14 22">Colocalizes with SPZ1 in the nucleus (By similarity). Colocalizes with URI1 at mitochondrion (PubMed:17936702). Rapidly exchanges between the nucleolar, nucleoplasmic and cytoplasmic compartments (PubMed:11739654). Highly mobile in cells and can be relocalized through interaction with targeting subunits (PubMed:17965019). In the presence of PPP1R8 relocalizes from the nucleolus to nuclear speckles (PubMed:11739654). Shows a dynamic targeting to specific sites throughout the cell cycle (PubMed:12529430). Highly concentrated in nucleoli of interphase cells and localizes at kinetochores early in mitosis (PubMed:12529430). Relocalization to chromosome-containing regions occurs at the transition from early to late anaphase (PubMed:12529430). Also accumulates at the cleavage furrow and midbody by telophase (PubMed:12529430). Colocalizes with DYNLT4 in the microtubule organizing center (MTOC) (PubMed:23789093).</text>
</comment>
<comment type="alternative products">
    <event type="alternative splicing"/>
    <isoform>
        <id>P36873-1</id>
        <name>1</name>
        <name>PPPCC1</name>
        <name>Gamma-1</name>
        <sequence type="displayed"/>
    </isoform>
    <isoform>
        <id>P36873-2</id>
        <name>2</name>
        <name>PPPCC2</name>
        <name>Gamma-2</name>
        <sequence type="described" ref="VSP_005094"/>
    </isoform>
</comment>
<comment type="induction">
    <text evidence="19">Up-regulated in synovial fluid mononuclear cells and peripheral blood mononuclear cells from patients with rheumatoid arthritis.</text>
</comment>
<comment type="PTM">
    <text evidence="9">Phosphorylated by NEK2.</text>
</comment>
<comment type="miscellaneous">
    <text>Microcystin toxin is bound to Cys-273 through a thioether bond.</text>
</comment>
<comment type="similarity">
    <text evidence="38">Belongs to the PPP phosphatase family. PP-1 subfamily.</text>
</comment>
<comment type="caution">
    <text evidence="15 24">Was originally thought to be part of the MLL5-L complex, at least composed of KMT2E, STK38, PPP1CA, PPP1CB, PPP1CC, HCFC1, ACTB and OGT (PubMed:19377461). However, the corresponding article has been retracted (PubMed:24336203).</text>
</comment>
<comment type="online information" name="Protein Spotlight">
    <link uri="https://www.proteinspotlight.org/back_issues/032"/>
    <text>The things we forget - Issue 32 of March 2003</text>
</comment>
<dbReference type="EC" id="3.1.3.16" evidence="30 31"/>
<dbReference type="EMBL" id="X74008">
    <property type="protein sequence ID" value="CAA52169.1"/>
    <property type="molecule type" value="mRNA"/>
</dbReference>
<dbReference type="EMBL" id="BC014073">
    <property type="protein sequence ID" value="AAH14073.1"/>
    <property type="molecule type" value="mRNA"/>
</dbReference>
<dbReference type="EMBL" id="L07395">
    <property type="protein sequence ID" value="AAA19823.1"/>
    <property type="molecule type" value="mRNA"/>
</dbReference>
<dbReference type="CCDS" id="CCDS58279.1">
    <molecule id="P36873-2"/>
</dbReference>
<dbReference type="CCDS" id="CCDS9150.1">
    <molecule id="P36873-1"/>
</dbReference>
<dbReference type="PIR" id="S35699">
    <property type="entry name" value="S35699"/>
</dbReference>
<dbReference type="PIR" id="S35700">
    <property type="entry name" value="S35700"/>
</dbReference>
<dbReference type="RefSeq" id="NP_001231903.1">
    <molecule id="P36873-2"/>
    <property type="nucleotide sequence ID" value="NM_001244974.2"/>
</dbReference>
<dbReference type="RefSeq" id="NP_002701.1">
    <molecule id="P36873-1"/>
    <property type="nucleotide sequence ID" value="NM_002710.4"/>
</dbReference>
<dbReference type="PDB" id="1IT6">
    <property type="method" value="X-ray"/>
    <property type="resolution" value="2.00 A"/>
    <property type="chains" value="A/B=1-323"/>
</dbReference>
<dbReference type="PDB" id="1JK7">
    <property type="method" value="X-ray"/>
    <property type="resolution" value="1.90 A"/>
    <property type="chains" value="A=1-323"/>
</dbReference>
<dbReference type="PDB" id="1U32">
    <property type="method" value="X-ray"/>
    <property type="resolution" value="2.00 A"/>
    <property type="chains" value="A=6-298"/>
</dbReference>
<dbReference type="PDB" id="2BCD">
    <property type="method" value="X-ray"/>
    <property type="resolution" value="2.10 A"/>
    <property type="chains" value="A=1-323"/>
</dbReference>
<dbReference type="PDB" id="2BDX">
    <property type="method" value="X-ray"/>
    <property type="resolution" value="2.30 A"/>
    <property type="chains" value="A=1-323"/>
</dbReference>
<dbReference type="PDB" id="4UT2">
    <property type="method" value="X-ray"/>
    <property type="resolution" value="1.96 A"/>
    <property type="chains" value="A/B=1-323"/>
</dbReference>
<dbReference type="PDB" id="4UT3">
    <property type="method" value="X-ray"/>
    <property type="resolution" value="2.19 A"/>
    <property type="chains" value="A/B=1-323"/>
</dbReference>
<dbReference type="PDB" id="5INB">
    <property type="method" value="X-ray"/>
    <property type="resolution" value="1.30 A"/>
    <property type="chains" value="A=7-308"/>
</dbReference>
<dbReference type="PDB" id="5J28">
    <property type="method" value="X-ray"/>
    <property type="resolution" value="2.00 A"/>
    <property type="chains" value="A/B=7-308"/>
</dbReference>
<dbReference type="PDB" id="7SD0">
    <property type="method" value="EM"/>
    <property type="resolution" value="2.95 A"/>
    <property type="chains" value="C=1-323"/>
</dbReference>
<dbReference type="PDB" id="8B5R">
    <property type="method" value="EM"/>
    <property type="resolution" value="6.10 A"/>
    <property type="chains" value="P=1-323"/>
</dbReference>
<dbReference type="PDBsum" id="1IT6"/>
<dbReference type="PDBsum" id="1JK7"/>
<dbReference type="PDBsum" id="1U32"/>
<dbReference type="PDBsum" id="2BCD"/>
<dbReference type="PDBsum" id="2BDX"/>
<dbReference type="PDBsum" id="4UT2"/>
<dbReference type="PDBsum" id="4UT3"/>
<dbReference type="PDBsum" id="5INB"/>
<dbReference type="PDBsum" id="5J28"/>
<dbReference type="PDBsum" id="7SD0"/>
<dbReference type="PDBsum" id="8B5R"/>
<dbReference type="EMDB" id="EMD-15774"/>
<dbReference type="EMDB" id="EMD-15778"/>
<dbReference type="EMDB" id="EMD-15846"/>
<dbReference type="EMDB" id="EMD-15847"/>
<dbReference type="EMDB" id="EMD-15861"/>
<dbReference type="EMDB" id="EMD-25044"/>
<dbReference type="SASBDB" id="P36873"/>
<dbReference type="SMR" id="P36873"/>
<dbReference type="BioGRID" id="111495">
    <property type="interactions" value="746"/>
</dbReference>
<dbReference type="ComplexPortal" id="CPX-25720">
    <property type="entry name" value="SHOC2-MRAS-PPP1CC complex"/>
</dbReference>
<dbReference type="CORUM" id="P36873"/>
<dbReference type="DIP" id="DIP-749N"/>
<dbReference type="FunCoup" id="P36873">
    <property type="interactions" value="3828"/>
</dbReference>
<dbReference type="IntAct" id="P36873">
    <property type="interactions" value="321"/>
</dbReference>
<dbReference type="MINT" id="P36873"/>
<dbReference type="STRING" id="9606.ENSP00000341779"/>
<dbReference type="BindingDB" id="P36873"/>
<dbReference type="ChEMBL" id="CHEMBL4438"/>
<dbReference type="DrugBank" id="DB02169">
    <property type="generic name" value="9,10-Deepithio-9,10-Didehydroacanthifolicin"/>
</dbReference>
<dbReference type="DrugBank" id="DB02860">
    <property type="generic name" value="Calyculin A"/>
</dbReference>
<dbReference type="DrugBank" id="DB06757">
    <property type="generic name" value="Manganese cation"/>
</dbReference>
<dbReference type="DrugBank" id="DB04738">
    <property type="generic name" value="Motuporin"/>
</dbReference>
<dbReference type="MoonDB" id="P36873">
    <property type="type" value="Predicted"/>
</dbReference>
<dbReference type="CarbonylDB" id="P36873"/>
<dbReference type="DEPOD" id="PPP1CC"/>
<dbReference type="GlyGen" id="P36873">
    <property type="glycosylation" value="4 sites, 1 O-linked glycan (1 site)"/>
</dbReference>
<dbReference type="iPTMnet" id="P36873"/>
<dbReference type="MetOSite" id="P36873"/>
<dbReference type="PhosphoSitePlus" id="P36873"/>
<dbReference type="SwissPalm" id="P36873"/>
<dbReference type="BioMuta" id="PPP1CC"/>
<dbReference type="DMDM" id="548573"/>
<dbReference type="jPOST" id="P36873"/>
<dbReference type="MassIVE" id="P36873"/>
<dbReference type="PaxDb" id="9606-ENSP00000341779"/>
<dbReference type="PeptideAtlas" id="P36873"/>
<dbReference type="PRIDE" id="P36873"/>
<dbReference type="ProteomicsDB" id="55224">
    <molecule id="P36873-1"/>
</dbReference>
<dbReference type="ProteomicsDB" id="55225">
    <molecule id="P36873-2"/>
</dbReference>
<dbReference type="Pumba" id="P36873"/>
<dbReference type="TopDownProteomics" id="P36873-1">
    <molecule id="P36873-1"/>
</dbReference>
<dbReference type="TopDownProteomics" id="P36873-2">
    <molecule id="P36873-2"/>
</dbReference>
<dbReference type="Antibodypedia" id="2879">
    <property type="antibodies" value="440 antibodies from 36 providers"/>
</dbReference>
<dbReference type="DNASU" id="5501"/>
<dbReference type="Ensembl" id="ENST00000335007.10">
    <molecule id="P36873-1"/>
    <property type="protein sequence ID" value="ENSP00000335084.5"/>
    <property type="gene ID" value="ENSG00000186298.12"/>
</dbReference>
<dbReference type="Ensembl" id="ENST00000340766.9">
    <molecule id="P36873-2"/>
    <property type="protein sequence ID" value="ENSP00000341779.5"/>
    <property type="gene ID" value="ENSG00000186298.12"/>
</dbReference>
<dbReference type="GeneID" id="5501"/>
<dbReference type="KEGG" id="hsa:5501"/>
<dbReference type="MANE-Select" id="ENST00000335007.10">
    <property type="protein sequence ID" value="ENSP00000335084.5"/>
    <property type="RefSeq nucleotide sequence ID" value="NM_002710.4"/>
    <property type="RefSeq protein sequence ID" value="NP_002701.1"/>
</dbReference>
<dbReference type="UCSC" id="uc001tru.4">
    <molecule id="P36873-1"/>
    <property type="organism name" value="human"/>
</dbReference>
<dbReference type="AGR" id="HGNC:9283"/>
<dbReference type="CTD" id="5501"/>
<dbReference type="DisGeNET" id="5501"/>
<dbReference type="GeneCards" id="PPP1CC"/>
<dbReference type="HGNC" id="HGNC:9283">
    <property type="gene designation" value="PPP1CC"/>
</dbReference>
<dbReference type="HPA" id="ENSG00000186298">
    <property type="expression patterns" value="Low tissue specificity"/>
</dbReference>
<dbReference type="MIM" id="176914">
    <property type="type" value="gene"/>
</dbReference>
<dbReference type="neXtProt" id="NX_P36873"/>
<dbReference type="OpenTargets" id="ENSG00000186298"/>
<dbReference type="PharmGKB" id="PA33611"/>
<dbReference type="VEuPathDB" id="HostDB:ENSG00000186298"/>
<dbReference type="eggNOG" id="KOG0374">
    <property type="taxonomic scope" value="Eukaryota"/>
</dbReference>
<dbReference type="GeneTree" id="ENSGT00940000153472"/>
<dbReference type="HOGENOM" id="CLU_004962_0_0_1"/>
<dbReference type="InParanoid" id="P36873"/>
<dbReference type="OMA" id="EEHEIRY"/>
<dbReference type="OrthoDB" id="1930084at2759"/>
<dbReference type="PAN-GO" id="P36873">
    <property type="GO annotations" value="3 GO annotations based on evolutionary models"/>
</dbReference>
<dbReference type="PhylomeDB" id="P36873"/>
<dbReference type="TreeFam" id="TF354243"/>
<dbReference type="BRENDA" id="3.1.3.16">
    <property type="organism ID" value="2681"/>
</dbReference>
<dbReference type="PathwayCommons" id="P36873"/>
<dbReference type="Reactome" id="R-HSA-141444">
    <property type="pathway name" value="Amplification of signal from unattached kinetochores via a MAD2 inhibitory signal"/>
</dbReference>
<dbReference type="Reactome" id="R-HSA-163560">
    <property type="pathway name" value="Triglyceride catabolism"/>
</dbReference>
<dbReference type="Reactome" id="R-HSA-2173788">
    <property type="pathway name" value="Downregulation of TGF-beta receptor signaling"/>
</dbReference>
<dbReference type="Reactome" id="R-HSA-2467813">
    <property type="pathway name" value="Separation of Sister Chromatids"/>
</dbReference>
<dbReference type="Reactome" id="R-HSA-2500257">
    <property type="pathway name" value="Resolution of Sister Chromatid Cohesion"/>
</dbReference>
<dbReference type="Reactome" id="R-HSA-400253">
    <property type="pathway name" value="Circadian Clock"/>
</dbReference>
<dbReference type="Reactome" id="R-HSA-5663220">
    <property type="pathway name" value="RHO GTPases Activate Formins"/>
</dbReference>
<dbReference type="Reactome" id="R-HSA-5673000">
    <property type="pathway name" value="RAF activation"/>
</dbReference>
<dbReference type="Reactome" id="R-HSA-68877">
    <property type="pathway name" value="Mitotic Prometaphase"/>
</dbReference>
<dbReference type="Reactome" id="R-HSA-9648025">
    <property type="pathway name" value="EML4 and NUDC in mitotic spindle formation"/>
</dbReference>
<dbReference type="Reactome" id="R-HSA-9726840">
    <property type="pathway name" value="SHOC2 M1731 mutant abolishes MRAS complex function"/>
</dbReference>
<dbReference type="Reactome" id="R-HSA-9726842">
    <property type="pathway name" value="Gain-of-function MRAS complexes activate RAF signaling"/>
</dbReference>
<dbReference type="Reactome" id="R-HSA-9828806">
    <property type="pathway name" value="Maturation of hRSV A proteins"/>
</dbReference>
<dbReference type="SignaLink" id="P36873"/>
<dbReference type="SIGNOR" id="P36873"/>
<dbReference type="BioGRID-ORCS" id="5501">
    <property type="hits" value="43 hits in 1182 CRISPR screens"/>
</dbReference>
<dbReference type="CD-CODE" id="8C2F96ED">
    <property type="entry name" value="Centrosome"/>
</dbReference>
<dbReference type="CD-CODE" id="91857CE7">
    <property type="entry name" value="Nucleolus"/>
</dbReference>
<dbReference type="CD-CODE" id="FB4E32DD">
    <property type="entry name" value="Presynaptic clusters and postsynaptic densities"/>
</dbReference>
<dbReference type="ChiTaRS" id="PPP1CC">
    <property type="organism name" value="human"/>
</dbReference>
<dbReference type="EvolutionaryTrace" id="P36873"/>
<dbReference type="GeneWiki" id="PPP1CC"/>
<dbReference type="GenomeRNAi" id="5501"/>
<dbReference type="Pharos" id="P36873">
    <property type="development level" value="Tchem"/>
</dbReference>
<dbReference type="PRO" id="PR:P36873"/>
<dbReference type="Proteomes" id="UP000005640">
    <property type="component" value="Chromosome 12"/>
</dbReference>
<dbReference type="RNAct" id="P36873">
    <property type="molecule type" value="protein"/>
</dbReference>
<dbReference type="Bgee" id="ENSG00000186298">
    <property type="expression patterns" value="Expressed in jejunal mucosa and 221 other cell types or tissues"/>
</dbReference>
<dbReference type="ExpressionAtlas" id="P36873">
    <property type="expression patterns" value="baseline and differential"/>
</dbReference>
<dbReference type="GO" id="GO:0032154">
    <property type="term" value="C:cleavage furrow"/>
    <property type="evidence" value="ECO:0007669"/>
    <property type="project" value="UniProtKB-SubCell"/>
</dbReference>
<dbReference type="GO" id="GO:0005737">
    <property type="term" value="C:cytoplasm"/>
    <property type="evidence" value="ECO:0000314"/>
    <property type="project" value="UniProtKB"/>
</dbReference>
<dbReference type="GO" id="GO:0005829">
    <property type="term" value="C:cytosol"/>
    <property type="evidence" value="ECO:0000304"/>
    <property type="project" value="Reactome"/>
</dbReference>
<dbReference type="GO" id="GO:0043197">
    <property type="term" value="C:dendritic spine"/>
    <property type="evidence" value="ECO:0007669"/>
    <property type="project" value="Ensembl"/>
</dbReference>
<dbReference type="GO" id="GO:0005925">
    <property type="term" value="C:focal adhesion"/>
    <property type="evidence" value="ECO:0007005"/>
    <property type="project" value="UniProtKB"/>
</dbReference>
<dbReference type="GO" id="GO:0098978">
    <property type="term" value="C:glutamatergic synapse"/>
    <property type="evidence" value="ECO:0007669"/>
    <property type="project" value="Ensembl"/>
</dbReference>
<dbReference type="GO" id="GO:0000776">
    <property type="term" value="C:kinetochore"/>
    <property type="evidence" value="ECO:0007669"/>
    <property type="project" value="UniProtKB-KW"/>
</dbReference>
<dbReference type="GO" id="GO:0005815">
    <property type="term" value="C:microtubule organizing center"/>
    <property type="evidence" value="ECO:0007669"/>
    <property type="project" value="UniProtKB-SubCell"/>
</dbReference>
<dbReference type="GO" id="GO:0030496">
    <property type="term" value="C:midbody"/>
    <property type="evidence" value="ECO:0007669"/>
    <property type="project" value="UniProtKB-SubCell"/>
</dbReference>
<dbReference type="GO" id="GO:0005741">
    <property type="term" value="C:mitochondrial outer membrane"/>
    <property type="evidence" value="ECO:0007669"/>
    <property type="project" value="Ensembl"/>
</dbReference>
<dbReference type="GO" id="GO:0005739">
    <property type="term" value="C:mitochondrion"/>
    <property type="evidence" value="ECO:0000314"/>
    <property type="project" value="UniProtKB"/>
</dbReference>
<dbReference type="GO" id="GO:0016607">
    <property type="term" value="C:nuclear speck"/>
    <property type="evidence" value="ECO:0007669"/>
    <property type="project" value="UniProtKB-SubCell"/>
</dbReference>
<dbReference type="GO" id="GO:0005730">
    <property type="term" value="C:nucleolus"/>
    <property type="evidence" value="ECO:0000314"/>
    <property type="project" value="UniProtKB"/>
</dbReference>
<dbReference type="GO" id="GO:0005634">
    <property type="term" value="C:nucleus"/>
    <property type="evidence" value="ECO:0000314"/>
    <property type="project" value="UniProtKB"/>
</dbReference>
<dbReference type="GO" id="GO:0098793">
    <property type="term" value="C:presynapse"/>
    <property type="evidence" value="ECO:0007669"/>
    <property type="project" value="Ensembl"/>
</dbReference>
<dbReference type="GO" id="GO:0032991">
    <property type="term" value="C:protein-containing complex"/>
    <property type="evidence" value="ECO:0000315"/>
    <property type="project" value="UniProtKB"/>
</dbReference>
<dbReference type="GO" id="GO:0072357">
    <property type="term" value="C:PTW/PP1 phosphatase complex"/>
    <property type="evidence" value="ECO:0000314"/>
    <property type="project" value="UniProtKB"/>
</dbReference>
<dbReference type="GO" id="GO:0005521">
    <property type="term" value="F:lamin binding"/>
    <property type="evidence" value="ECO:0007669"/>
    <property type="project" value="Ensembl"/>
</dbReference>
<dbReference type="GO" id="GO:0046872">
    <property type="term" value="F:metal ion binding"/>
    <property type="evidence" value="ECO:0007669"/>
    <property type="project" value="UniProtKB-KW"/>
</dbReference>
<dbReference type="GO" id="GO:0016791">
    <property type="term" value="F:phosphatase activity"/>
    <property type="evidence" value="ECO:0000250"/>
    <property type="project" value="UniProtKB"/>
</dbReference>
<dbReference type="GO" id="GO:0004721">
    <property type="term" value="F:phosphoprotein phosphatase activity"/>
    <property type="evidence" value="ECO:0000304"/>
    <property type="project" value="Reactome"/>
</dbReference>
<dbReference type="GO" id="GO:0019904">
    <property type="term" value="F:protein domain specific binding"/>
    <property type="evidence" value="ECO:0007669"/>
    <property type="project" value="Ensembl"/>
</dbReference>
<dbReference type="GO" id="GO:0019901">
    <property type="term" value="F:protein kinase binding"/>
    <property type="evidence" value="ECO:0000353"/>
    <property type="project" value="UniProtKB"/>
</dbReference>
<dbReference type="GO" id="GO:0008157">
    <property type="term" value="F:protein phosphatase 1 binding"/>
    <property type="evidence" value="ECO:0007669"/>
    <property type="project" value="Ensembl"/>
</dbReference>
<dbReference type="GO" id="GO:0004722">
    <property type="term" value="F:protein serine/threonine phosphatase activity"/>
    <property type="evidence" value="ECO:0000314"/>
    <property type="project" value="UniProtKB"/>
</dbReference>
<dbReference type="GO" id="GO:0044877">
    <property type="term" value="F:protein-containing complex binding"/>
    <property type="evidence" value="ECO:0007669"/>
    <property type="project" value="Ensembl"/>
</dbReference>
<dbReference type="GO" id="GO:0003723">
    <property type="term" value="F:RNA binding"/>
    <property type="evidence" value="ECO:0007005"/>
    <property type="project" value="UniProtKB"/>
</dbReference>
<dbReference type="GO" id="GO:0001824">
    <property type="term" value="P:blastocyst development"/>
    <property type="evidence" value="ECO:0007669"/>
    <property type="project" value="Ensembl"/>
</dbReference>
<dbReference type="GO" id="GO:0051301">
    <property type="term" value="P:cell division"/>
    <property type="evidence" value="ECO:0007669"/>
    <property type="project" value="UniProtKB-KW"/>
</dbReference>
<dbReference type="GO" id="GO:0032922">
    <property type="term" value="P:circadian regulation of gene expression"/>
    <property type="evidence" value="ECO:0000250"/>
    <property type="project" value="UniProtKB"/>
</dbReference>
<dbReference type="GO" id="GO:0043153">
    <property type="term" value="P:entrainment of circadian clock by photoperiod"/>
    <property type="evidence" value="ECO:0000250"/>
    <property type="project" value="UniProtKB"/>
</dbReference>
<dbReference type="GO" id="GO:0005977">
    <property type="term" value="P:glycogen metabolic process"/>
    <property type="evidence" value="ECO:0007669"/>
    <property type="project" value="UniProtKB-KW"/>
</dbReference>
<dbReference type="GO" id="GO:0000165">
    <property type="term" value="P:MAPK cascade"/>
    <property type="evidence" value="ECO:0000304"/>
    <property type="project" value="Reactome"/>
</dbReference>
<dbReference type="GO" id="GO:0000070">
    <property type="term" value="P:mitotic sister chromatid segregation"/>
    <property type="evidence" value="ECO:0000304"/>
    <property type="project" value="Reactome"/>
</dbReference>
<dbReference type="GO" id="GO:0030182">
    <property type="term" value="P:neuron differentiation"/>
    <property type="evidence" value="ECO:0007669"/>
    <property type="project" value="Ensembl"/>
</dbReference>
<dbReference type="GO" id="GO:0060252">
    <property type="term" value="P:positive regulation of glial cell proliferation"/>
    <property type="evidence" value="ECO:0007669"/>
    <property type="project" value="Ensembl"/>
</dbReference>
<dbReference type="GO" id="GO:0006470">
    <property type="term" value="P:protein dephosphorylation"/>
    <property type="evidence" value="ECO:0000315"/>
    <property type="project" value="MGI"/>
</dbReference>
<dbReference type="GO" id="GO:0042752">
    <property type="term" value="P:regulation of circadian rhythm"/>
    <property type="evidence" value="ECO:0000315"/>
    <property type="project" value="UniProtKB"/>
</dbReference>
<dbReference type="GO" id="GO:0046822">
    <property type="term" value="P:regulation of nucleocytoplasmic transport"/>
    <property type="evidence" value="ECO:0007669"/>
    <property type="project" value="Ensembl"/>
</dbReference>
<dbReference type="GO" id="GO:0007283">
    <property type="term" value="P:spermatogenesis"/>
    <property type="evidence" value="ECO:0007669"/>
    <property type="project" value="Ensembl"/>
</dbReference>
<dbReference type="CDD" id="cd07414">
    <property type="entry name" value="MPP_PP1_PPKL"/>
    <property type="match status" value="1"/>
</dbReference>
<dbReference type="FunFam" id="3.60.21.10:FF:000004">
    <property type="entry name" value="Serine/threonine-protein phosphatase"/>
    <property type="match status" value="1"/>
</dbReference>
<dbReference type="Gene3D" id="3.60.21.10">
    <property type="match status" value="1"/>
</dbReference>
<dbReference type="InterPro" id="IPR004843">
    <property type="entry name" value="Calcineurin-like_PHP_ApaH"/>
</dbReference>
<dbReference type="InterPro" id="IPR029052">
    <property type="entry name" value="Metallo-depent_PP-like"/>
</dbReference>
<dbReference type="InterPro" id="IPR050341">
    <property type="entry name" value="PP1_catalytic_subunit"/>
</dbReference>
<dbReference type="InterPro" id="IPR006186">
    <property type="entry name" value="Ser/Thr-sp_prot-phosphatase"/>
</dbReference>
<dbReference type="InterPro" id="IPR031675">
    <property type="entry name" value="STPPase_N"/>
</dbReference>
<dbReference type="PANTHER" id="PTHR11668">
    <property type="entry name" value="SERINE/THREONINE PROTEIN PHOSPHATASE"/>
    <property type="match status" value="1"/>
</dbReference>
<dbReference type="PANTHER" id="PTHR11668:SF300">
    <property type="entry name" value="SERINE_THREONINE-PROTEIN PHOSPHATASE"/>
    <property type="match status" value="1"/>
</dbReference>
<dbReference type="Pfam" id="PF00149">
    <property type="entry name" value="Metallophos"/>
    <property type="match status" value="1"/>
</dbReference>
<dbReference type="Pfam" id="PF16891">
    <property type="entry name" value="STPPase_N"/>
    <property type="match status" value="1"/>
</dbReference>
<dbReference type="PRINTS" id="PR00114">
    <property type="entry name" value="STPHPHTASE"/>
</dbReference>
<dbReference type="SMART" id="SM00156">
    <property type="entry name" value="PP2Ac"/>
    <property type="match status" value="1"/>
</dbReference>
<dbReference type="SUPFAM" id="SSF56300">
    <property type="entry name" value="Metallo-dependent phosphatases"/>
    <property type="match status" value="1"/>
</dbReference>
<dbReference type="PROSITE" id="PS00125">
    <property type="entry name" value="SER_THR_PHOSPHATASE"/>
    <property type="match status" value="1"/>
</dbReference>